<reference key="1">
    <citation type="journal article" date="2000" name="Science">
        <title>The genome sequence of Drosophila melanogaster.</title>
        <authorList>
            <person name="Adams M.D."/>
            <person name="Celniker S.E."/>
            <person name="Holt R.A."/>
            <person name="Evans C.A."/>
            <person name="Gocayne J.D."/>
            <person name="Amanatides P.G."/>
            <person name="Scherer S.E."/>
            <person name="Li P.W."/>
            <person name="Hoskins R.A."/>
            <person name="Galle R.F."/>
            <person name="George R.A."/>
            <person name="Lewis S.E."/>
            <person name="Richards S."/>
            <person name="Ashburner M."/>
            <person name="Henderson S.N."/>
            <person name="Sutton G.G."/>
            <person name="Wortman J.R."/>
            <person name="Yandell M.D."/>
            <person name="Zhang Q."/>
            <person name="Chen L.X."/>
            <person name="Brandon R.C."/>
            <person name="Rogers Y.-H.C."/>
            <person name="Blazej R.G."/>
            <person name="Champe M."/>
            <person name="Pfeiffer B.D."/>
            <person name="Wan K.H."/>
            <person name="Doyle C."/>
            <person name="Baxter E.G."/>
            <person name="Helt G."/>
            <person name="Nelson C.R."/>
            <person name="Miklos G.L.G."/>
            <person name="Abril J.F."/>
            <person name="Agbayani A."/>
            <person name="An H.-J."/>
            <person name="Andrews-Pfannkoch C."/>
            <person name="Baldwin D."/>
            <person name="Ballew R.M."/>
            <person name="Basu A."/>
            <person name="Baxendale J."/>
            <person name="Bayraktaroglu L."/>
            <person name="Beasley E.M."/>
            <person name="Beeson K.Y."/>
            <person name="Benos P.V."/>
            <person name="Berman B.P."/>
            <person name="Bhandari D."/>
            <person name="Bolshakov S."/>
            <person name="Borkova D."/>
            <person name="Botchan M.R."/>
            <person name="Bouck J."/>
            <person name="Brokstein P."/>
            <person name="Brottier P."/>
            <person name="Burtis K.C."/>
            <person name="Busam D.A."/>
            <person name="Butler H."/>
            <person name="Cadieu E."/>
            <person name="Center A."/>
            <person name="Chandra I."/>
            <person name="Cherry J.M."/>
            <person name="Cawley S."/>
            <person name="Dahlke C."/>
            <person name="Davenport L.B."/>
            <person name="Davies P."/>
            <person name="de Pablos B."/>
            <person name="Delcher A."/>
            <person name="Deng Z."/>
            <person name="Mays A.D."/>
            <person name="Dew I."/>
            <person name="Dietz S.M."/>
            <person name="Dodson K."/>
            <person name="Doup L.E."/>
            <person name="Downes M."/>
            <person name="Dugan-Rocha S."/>
            <person name="Dunkov B.C."/>
            <person name="Dunn P."/>
            <person name="Durbin K.J."/>
            <person name="Evangelista C.C."/>
            <person name="Ferraz C."/>
            <person name="Ferriera S."/>
            <person name="Fleischmann W."/>
            <person name="Fosler C."/>
            <person name="Gabrielian A.E."/>
            <person name="Garg N.S."/>
            <person name="Gelbart W.M."/>
            <person name="Glasser K."/>
            <person name="Glodek A."/>
            <person name="Gong F."/>
            <person name="Gorrell J.H."/>
            <person name="Gu Z."/>
            <person name="Guan P."/>
            <person name="Harris M."/>
            <person name="Harris N.L."/>
            <person name="Harvey D.A."/>
            <person name="Heiman T.J."/>
            <person name="Hernandez J.R."/>
            <person name="Houck J."/>
            <person name="Hostin D."/>
            <person name="Houston K.A."/>
            <person name="Howland T.J."/>
            <person name="Wei M.-H."/>
            <person name="Ibegwam C."/>
            <person name="Jalali M."/>
            <person name="Kalush F."/>
            <person name="Karpen G.H."/>
            <person name="Ke Z."/>
            <person name="Kennison J.A."/>
            <person name="Ketchum K.A."/>
            <person name="Kimmel B.E."/>
            <person name="Kodira C.D."/>
            <person name="Kraft C.L."/>
            <person name="Kravitz S."/>
            <person name="Kulp D."/>
            <person name="Lai Z."/>
            <person name="Lasko P."/>
            <person name="Lei Y."/>
            <person name="Levitsky A.A."/>
            <person name="Li J.H."/>
            <person name="Li Z."/>
            <person name="Liang Y."/>
            <person name="Lin X."/>
            <person name="Liu X."/>
            <person name="Mattei B."/>
            <person name="McIntosh T.C."/>
            <person name="McLeod M.P."/>
            <person name="McPherson D."/>
            <person name="Merkulov G."/>
            <person name="Milshina N.V."/>
            <person name="Mobarry C."/>
            <person name="Morris J."/>
            <person name="Moshrefi A."/>
            <person name="Mount S.M."/>
            <person name="Moy M."/>
            <person name="Murphy B."/>
            <person name="Murphy L."/>
            <person name="Muzny D.M."/>
            <person name="Nelson D.L."/>
            <person name="Nelson D.R."/>
            <person name="Nelson K.A."/>
            <person name="Nixon K."/>
            <person name="Nusskern D.R."/>
            <person name="Pacleb J.M."/>
            <person name="Palazzolo M."/>
            <person name="Pittman G.S."/>
            <person name="Pan S."/>
            <person name="Pollard J."/>
            <person name="Puri V."/>
            <person name="Reese M.G."/>
            <person name="Reinert K."/>
            <person name="Remington K."/>
            <person name="Saunders R.D.C."/>
            <person name="Scheeler F."/>
            <person name="Shen H."/>
            <person name="Shue B.C."/>
            <person name="Siden-Kiamos I."/>
            <person name="Simpson M."/>
            <person name="Skupski M.P."/>
            <person name="Smith T.J."/>
            <person name="Spier E."/>
            <person name="Spradling A.C."/>
            <person name="Stapleton M."/>
            <person name="Strong R."/>
            <person name="Sun E."/>
            <person name="Svirskas R."/>
            <person name="Tector C."/>
            <person name="Turner R."/>
            <person name="Venter E."/>
            <person name="Wang A.H."/>
            <person name="Wang X."/>
            <person name="Wang Z.-Y."/>
            <person name="Wassarman D.A."/>
            <person name="Weinstock G.M."/>
            <person name="Weissenbach J."/>
            <person name="Williams S.M."/>
            <person name="Woodage T."/>
            <person name="Worley K.C."/>
            <person name="Wu D."/>
            <person name="Yang S."/>
            <person name="Yao Q.A."/>
            <person name="Ye J."/>
            <person name="Yeh R.-F."/>
            <person name="Zaveri J.S."/>
            <person name="Zhan M."/>
            <person name="Zhang G."/>
            <person name="Zhao Q."/>
            <person name="Zheng L."/>
            <person name="Zheng X.H."/>
            <person name="Zhong F.N."/>
            <person name="Zhong W."/>
            <person name="Zhou X."/>
            <person name="Zhu S.C."/>
            <person name="Zhu X."/>
            <person name="Smith H.O."/>
            <person name="Gibbs R.A."/>
            <person name="Myers E.W."/>
            <person name="Rubin G.M."/>
            <person name="Venter J.C."/>
        </authorList>
    </citation>
    <scope>NUCLEOTIDE SEQUENCE [LARGE SCALE GENOMIC DNA]</scope>
    <source>
        <strain>Berkeley</strain>
    </source>
</reference>
<reference key="2">
    <citation type="journal article" date="2002" name="Genome Biol.">
        <title>Annotation of the Drosophila melanogaster euchromatic genome: a systematic review.</title>
        <authorList>
            <person name="Misra S."/>
            <person name="Crosby M.A."/>
            <person name="Mungall C.J."/>
            <person name="Matthews B.B."/>
            <person name="Campbell K.S."/>
            <person name="Hradecky P."/>
            <person name="Huang Y."/>
            <person name="Kaminker J.S."/>
            <person name="Millburn G.H."/>
            <person name="Prochnik S.E."/>
            <person name="Smith C.D."/>
            <person name="Tupy J.L."/>
            <person name="Whitfield E.J."/>
            <person name="Bayraktaroglu L."/>
            <person name="Berman B.P."/>
            <person name="Bettencourt B.R."/>
            <person name="Celniker S.E."/>
            <person name="de Grey A.D.N.J."/>
            <person name="Drysdale R.A."/>
            <person name="Harris N.L."/>
            <person name="Richter J."/>
            <person name="Russo S."/>
            <person name="Schroeder A.J."/>
            <person name="Shu S.Q."/>
            <person name="Stapleton M."/>
            <person name="Yamada C."/>
            <person name="Ashburner M."/>
            <person name="Gelbart W.M."/>
            <person name="Rubin G.M."/>
            <person name="Lewis S.E."/>
        </authorList>
    </citation>
    <scope>GENOME REANNOTATION</scope>
    <source>
        <strain>Berkeley</strain>
    </source>
</reference>
<reference key="3">
    <citation type="journal article" date="2002" name="Genome Biol.">
        <title>A Drosophila full-length cDNA resource.</title>
        <authorList>
            <person name="Stapleton M."/>
            <person name="Carlson J.W."/>
            <person name="Brokstein P."/>
            <person name="Yu C."/>
            <person name="Champe M."/>
            <person name="George R.A."/>
            <person name="Guarin H."/>
            <person name="Kronmiller B."/>
            <person name="Pacleb J.M."/>
            <person name="Park S."/>
            <person name="Wan K.H."/>
            <person name="Rubin G.M."/>
            <person name="Celniker S.E."/>
        </authorList>
    </citation>
    <scope>NUCLEOTIDE SEQUENCE [LARGE SCALE MRNA]</scope>
    <source>
        <strain>Berkeley</strain>
        <tissue>Larva</tissue>
        <tissue>Pupae</tissue>
    </source>
</reference>
<reference key="4">
    <citation type="journal article" date="2013" name="Hum. Mol. Genet.">
        <title>CEP89 is required for mitochondrial metabolism and neuronal function in man and fly.</title>
        <authorList>
            <person name="van Bon B.W."/>
            <person name="Oortveld M.A."/>
            <person name="Nijtmans L.G."/>
            <person name="Fenckova M."/>
            <person name="Nijhof B."/>
            <person name="Besseling J."/>
            <person name="Vos M."/>
            <person name="Kramer J.M."/>
            <person name="de Leeuw N."/>
            <person name="Castells-Nobau A."/>
            <person name="Asztalos L."/>
            <person name="Viragh E."/>
            <person name="Ruiter M."/>
            <person name="Hofmann F."/>
            <person name="Eshuis L."/>
            <person name="Collavin L."/>
            <person name="Huynen M.A."/>
            <person name="Asztalos Z."/>
            <person name="Verstreken P."/>
            <person name="Rodenburg R.J."/>
            <person name="Smeitink J.A."/>
            <person name="de Vries B.B."/>
            <person name="Schenck A."/>
        </authorList>
    </citation>
    <scope>FUNCTION</scope>
    <scope>DISRUPTION PHENOTYPE</scope>
</reference>
<proteinExistence type="evidence at transcript level"/>
<dbReference type="EMBL" id="AE013599">
    <property type="protein sequence ID" value="AAF58113.1"/>
    <property type="molecule type" value="Genomic_DNA"/>
</dbReference>
<dbReference type="EMBL" id="AY119085">
    <property type="protein sequence ID" value="AAM50945.1"/>
    <property type="molecule type" value="mRNA"/>
</dbReference>
<dbReference type="RefSeq" id="NP_611053.1">
    <property type="nucleotide sequence ID" value="NM_137209.4"/>
</dbReference>
<dbReference type="SMR" id="Q7JVA5"/>
<dbReference type="BioGRID" id="62466">
    <property type="interactions" value="4"/>
</dbReference>
<dbReference type="IntAct" id="Q7JVA5">
    <property type="interactions" value="3"/>
</dbReference>
<dbReference type="STRING" id="7227.FBpp0086454"/>
<dbReference type="PaxDb" id="7227-FBpp0086454"/>
<dbReference type="DNASU" id="36733"/>
<dbReference type="EnsemblMetazoa" id="FBtr0087320">
    <property type="protein sequence ID" value="FBpp0086454"/>
    <property type="gene ID" value="FBgn0266708"/>
</dbReference>
<dbReference type="GeneID" id="36733"/>
<dbReference type="KEGG" id="dme:Dmel_CG8214"/>
<dbReference type="UCSC" id="CG8214-RA">
    <property type="organism name" value="d. melanogaster"/>
</dbReference>
<dbReference type="AGR" id="FB:FBgn0266708"/>
<dbReference type="CTD" id="84902"/>
<dbReference type="FlyBase" id="FBgn0266708">
    <property type="gene designation" value="Cep89"/>
</dbReference>
<dbReference type="VEuPathDB" id="VectorBase:FBgn0266708"/>
<dbReference type="eggNOG" id="ENOG502QWK8">
    <property type="taxonomic scope" value="Eukaryota"/>
</dbReference>
<dbReference type="HOGENOM" id="CLU_503635_0_0_1"/>
<dbReference type="InParanoid" id="Q7JVA5"/>
<dbReference type="OMA" id="RYNDQFA"/>
<dbReference type="OrthoDB" id="6622877at2759"/>
<dbReference type="PhylomeDB" id="Q7JVA5"/>
<dbReference type="BioGRID-ORCS" id="36733">
    <property type="hits" value="0 hits in 1 CRISPR screen"/>
</dbReference>
<dbReference type="GenomeRNAi" id="36733"/>
<dbReference type="PRO" id="PR:Q7JVA5"/>
<dbReference type="Proteomes" id="UP000000803">
    <property type="component" value="Chromosome 2R"/>
</dbReference>
<dbReference type="Bgee" id="FBgn0266708">
    <property type="expression patterns" value="Expressed in early-mid elongation-stage spermatid (Drosophila) in testis and 13 other cell types or tissues"/>
</dbReference>
<dbReference type="GO" id="GO:0005814">
    <property type="term" value="C:centriole"/>
    <property type="evidence" value="ECO:0000318"/>
    <property type="project" value="GO_Central"/>
</dbReference>
<dbReference type="GO" id="GO:0097539">
    <property type="term" value="C:ciliary transition fiber"/>
    <property type="evidence" value="ECO:0000314"/>
    <property type="project" value="FlyBase"/>
</dbReference>
<dbReference type="GO" id="GO:0005829">
    <property type="term" value="C:cytosol"/>
    <property type="evidence" value="ECO:0000250"/>
    <property type="project" value="FlyBase"/>
</dbReference>
<dbReference type="GO" id="GO:0005758">
    <property type="term" value="C:mitochondrial intermembrane space"/>
    <property type="evidence" value="ECO:0000250"/>
    <property type="project" value="FlyBase"/>
</dbReference>
<dbReference type="GO" id="GO:0045202">
    <property type="term" value="C:synapse"/>
    <property type="evidence" value="ECO:0007669"/>
    <property type="project" value="GOC"/>
</dbReference>
<dbReference type="GO" id="GO:0007268">
    <property type="term" value="P:chemical synaptic transmission"/>
    <property type="evidence" value="ECO:0007669"/>
    <property type="project" value="InterPro"/>
</dbReference>
<dbReference type="GO" id="GO:0060271">
    <property type="term" value="P:cilium assembly"/>
    <property type="evidence" value="ECO:0000318"/>
    <property type="project" value="GO_Central"/>
</dbReference>
<dbReference type="GO" id="GO:0033617">
    <property type="term" value="P:mitochondrial cytochrome c oxidase assembly"/>
    <property type="evidence" value="ECO:0000315"/>
    <property type="project" value="FlyBase"/>
</dbReference>
<dbReference type="GO" id="GO:0007005">
    <property type="term" value="P:mitochondrion organization"/>
    <property type="evidence" value="ECO:0000318"/>
    <property type="project" value="GO_Central"/>
</dbReference>
<dbReference type="GO" id="GO:1905515">
    <property type="term" value="P:non-motile cilium assembly"/>
    <property type="evidence" value="ECO:0000315"/>
    <property type="project" value="FlyBase"/>
</dbReference>
<dbReference type="InterPro" id="IPR033545">
    <property type="entry name" value="CEP89"/>
</dbReference>
<dbReference type="PANTHER" id="PTHR36170">
    <property type="entry name" value="CENTROSOMAL PROTEIN OF 89 KDA"/>
    <property type="match status" value="1"/>
</dbReference>
<dbReference type="PANTHER" id="PTHR36170:SF1">
    <property type="entry name" value="CENTROSOMAL PROTEIN OF 89 KDA"/>
    <property type="match status" value="1"/>
</dbReference>
<gene>
    <name type="primary">Cep89</name>
    <name type="ORF">CG8214</name>
</gene>
<comment type="function">
    <text evidence="3">Required for mitochondrial complex IV activity. May be involved in non-associative learning.</text>
</comment>
<comment type="subcellular location">
    <subcellularLocation>
        <location evidence="1">Cytoplasm</location>
        <location evidence="1">Cytosol</location>
    </subcellularLocation>
    <subcellularLocation>
        <location evidence="1">Mitochondrion intermembrane space</location>
    </subcellularLocation>
</comment>
<comment type="disruption phenotype">
    <text evidence="3">RNAi-mediated knockdown of the protein causes complete lethality at a late pupal stage. Muscle-specific knockdown is lethal under strongly induced conditions, but shows no obvious alteration in locomotion and behavior under mild induction conditions. Neuron-specific knockdown flies show striking motor defects. Analysis of synaptic and subsynaptic organization at larval neuromuscular junction shows normal overall synapse morphology, but a highly significant decrease in the amount of active zones, i.e. presynaptic microdomains of neurotransmitter release. Muscle size is smaller in knockdown animals compared to wild-type. Neuron-specific knockdown flies show decreased ability for non-associative learning, tested by non-associative jump-reflex habituation. Wing-specific knockdown produces flies with a dramatically reduced wing size. Eye-specific knockdown disturbs ommatidia and bristle organization and corrupts integrity of mitochondria. Electroretinograms show a gross defect in basal neurotransmission.</text>
</comment>
<keyword id="KW-0963">Cytoplasm</keyword>
<keyword id="KW-0496">Mitochondrion</keyword>
<keyword id="KW-1185">Reference proteome</keyword>
<name>CEP89_DROME</name>
<protein>
    <recommendedName>
        <fullName>Protein Cep89 homolog</fullName>
    </recommendedName>
</protein>
<evidence type="ECO:0000250" key="1"/>
<evidence type="ECO:0000256" key="2">
    <source>
        <dbReference type="SAM" id="MobiDB-lite"/>
    </source>
</evidence>
<evidence type="ECO:0000269" key="3">
    <source>
    </source>
</evidence>
<organism>
    <name type="scientific">Drosophila melanogaster</name>
    <name type="common">Fruit fly</name>
    <dbReference type="NCBI Taxonomy" id="7227"/>
    <lineage>
        <taxon>Eukaryota</taxon>
        <taxon>Metazoa</taxon>
        <taxon>Ecdysozoa</taxon>
        <taxon>Arthropoda</taxon>
        <taxon>Hexapoda</taxon>
        <taxon>Insecta</taxon>
        <taxon>Pterygota</taxon>
        <taxon>Neoptera</taxon>
        <taxon>Endopterygota</taxon>
        <taxon>Diptera</taxon>
        <taxon>Brachycera</taxon>
        <taxon>Muscomorpha</taxon>
        <taxon>Ephydroidea</taxon>
        <taxon>Drosophilidae</taxon>
        <taxon>Drosophila</taxon>
        <taxon>Sophophora</taxon>
    </lineage>
</organism>
<feature type="chain" id="PRO_0000423045" description="Protein Cep89 homolog">
    <location>
        <begin position="1"/>
        <end position="476"/>
    </location>
</feature>
<feature type="region of interest" description="Disordered" evidence="2">
    <location>
        <begin position="1"/>
        <end position="29"/>
    </location>
</feature>
<feature type="region of interest" description="Disordered" evidence="2">
    <location>
        <begin position="172"/>
        <end position="193"/>
    </location>
</feature>
<feature type="compositionally biased region" description="Polar residues" evidence="2">
    <location>
        <begin position="180"/>
        <end position="190"/>
    </location>
</feature>
<accession>Q7JVA5</accession>
<sequence>MSTRNVMITDLDQPDPNQQQHHQNPKKNRKVLQTLSGNFNRRSRSVEVEVKRQDNLGVVHKDRKKDRSFNSLLQAKDQQLEQLVQRLATLHRYNDQFAKENDQLRKDSGQLERRLTEAEQQVANCSRCQQLGQRLDTVLAQNRTLAGDVDMLKTLVFRLNVQIESYQDQRRLGEGAPTCGGSTKVSSSSAPYPPLPTHTLGPLLQAYDESLRDKDALLAQYNTEFEHFTGELKRALEENTKLLQSQEQLRRDLGGWREERVCLQAQLGVCRSKAEAQTRKTDLAKEKLVEVMHCYEQRMQTLILDMDHLQAAYARTKSELAALKSASSAAPAAVAPPVPAESEALHQCKALLEQLRQEHARERTCLQEQLQATTARAASLVRSTEKAKHSRDRLKARLRMALQWAQKLEAGQAEVRDTYEAVRRLEVLVQHKESQLRGLHARNAEEMDKLRHKLQQKEETICALLRGKMERRPAVD</sequence>